<organism>
    <name type="scientific">Staphylococcus aureus (strain N315)</name>
    <dbReference type="NCBI Taxonomy" id="158879"/>
    <lineage>
        <taxon>Bacteria</taxon>
        <taxon>Bacillati</taxon>
        <taxon>Bacillota</taxon>
        <taxon>Bacilli</taxon>
        <taxon>Bacillales</taxon>
        <taxon>Staphylococcaceae</taxon>
        <taxon>Staphylococcus</taxon>
    </lineage>
</organism>
<keyword id="KW-0067">ATP-binding</keyword>
<keyword id="KW-0143">Chaperone</keyword>
<keyword id="KW-0547">Nucleotide-binding</keyword>
<dbReference type="EMBL" id="BA000018">
    <property type="protein sequence ID" value="BAB43639.1"/>
    <property type="molecule type" value="Genomic_DNA"/>
</dbReference>
<dbReference type="PIR" id="E90059">
    <property type="entry name" value="E90059"/>
</dbReference>
<dbReference type="RefSeq" id="WP_001058993.1">
    <property type="nucleotide sequence ID" value="NC_002745.2"/>
</dbReference>
<dbReference type="SMR" id="Q7A3F4"/>
<dbReference type="EnsemblBacteria" id="BAB43639">
    <property type="protein sequence ID" value="BAB43639"/>
    <property type="gene ID" value="BAB43639"/>
</dbReference>
<dbReference type="KEGG" id="sau:SA2336"/>
<dbReference type="HOGENOM" id="CLU_005070_4_3_9"/>
<dbReference type="GO" id="GO:0005737">
    <property type="term" value="C:cytoplasm"/>
    <property type="evidence" value="ECO:0007669"/>
    <property type="project" value="TreeGrafter"/>
</dbReference>
<dbReference type="GO" id="GO:0005524">
    <property type="term" value="F:ATP binding"/>
    <property type="evidence" value="ECO:0007669"/>
    <property type="project" value="UniProtKB-KW"/>
</dbReference>
<dbReference type="GO" id="GO:0016887">
    <property type="term" value="F:ATP hydrolysis activity"/>
    <property type="evidence" value="ECO:0007669"/>
    <property type="project" value="InterPro"/>
</dbReference>
<dbReference type="GO" id="GO:0034605">
    <property type="term" value="P:cellular response to heat"/>
    <property type="evidence" value="ECO:0007669"/>
    <property type="project" value="TreeGrafter"/>
</dbReference>
<dbReference type="CDD" id="cd00009">
    <property type="entry name" value="AAA"/>
    <property type="match status" value="1"/>
</dbReference>
<dbReference type="CDD" id="cd19499">
    <property type="entry name" value="RecA-like_ClpB_Hsp104-like"/>
    <property type="match status" value="1"/>
</dbReference>
<dbReference type="FunFam" id="3.40.50.300:FF:000025">
    <property type="entry name" value="ATP-dependent Clp protease subunit"/>
    <property type="match status" value="1"/>
</dbReference>
<dbReference type="Gene3D" id="1.10.8.60">
    <property type="match status" value="2"/>
</dbReference>
<dbReference type="Gene3D" id="3.40.50.300">
    <property type="entry name" value="P-loop containing nucleotide triphosphate hydrolases"/>
    <property type="match status" value="2"/>
</dbReference>
<dbReference type="Gene3D" id="4.10.860.10">
    <property type="entry name" value="UVR domain"/>
    <property type="match status" value="1"/>
</dbReference>
<dbReference type="InterPro" id="IPR003593">
    <property type="entry name" value="AAA+_ATPase"/>
</dbReference>
<dbReference type="InterPro" id="IPR003959">
    <property type="entry name" value="ATPase_AAA_core"/>
</dbReference>
<dbReference type="InterPro" id="IPR019489">
    <property type="entry name" value="Clp_ATPase_C"/>
</dbReference>
<dbReference type="InterPro" id="IPR001270">
    <property type="entry name" value="ClpA/B"/>
</dbReference>
<dbReference type="InterPro" id="IPR041546">
    <property type="entry name" value="ClpA/ClpB_AAA_lid"/>
</dbReference>
<dbReference type="InterPro" id="IPR050130">
    <property type="entry name" value="ClpA_ClpB"/>
</dbReference>
<dbReference type="InterPro" id="IPR027417">
    <property type="entry name" value="P-loop_NTPase"/>
</dbReference>
<dbReference type="PANTHER" id="PTHR11638">
    <property type="entry name" value="ATP-DEPENDENT CLP PROTEASE"/>
    <property type="match status" value="1"/>
</dbReference>
<dbReference type="PANTHER" id="PTHR11638:SF188">
    <property type="entry name" value="ATP-DEPENDENT CLP PROTEASE ATP-BINDING SUBUNIT CLPL"/>
    <property type="match status" value="1"/>
</dbReference>
<dbReference type="Pfam" id="PF00004">
    <property type="entry name" value="AAA"/>
    <property type="match status" value="1"/>
</dbReference>
<dbReference type="Pfam" id="PF07724">
    <property type="entry name" value="AAA_2"/>
    <property type="match status" value="1"/>
</dbReference>
<dbReference type="Pfam" id="PF17871">
    <property type="entry name" value="AAA_lid_9"/>
    <property type="match status" value="1"/>
</dbReference>
<dbReference type="Pfam" id="PF10431">
    <property type="entry name" value="ClpB_D2-small"/>
    <property type="match status" value="1"/>
</dbReference>
<dbReference type="PRINTS" id="PR00300">
    <property type="entry name" value="CLPPROTEASEA"/>
</dbReference>
<dbReference type="SMART" id="SM00382">
    <property type="entry name" value="AAA"/>
    <property type="match status" value="2"/>
</dbReference>
<dbReference type="SMART" id="SM01086">
    <property type="entry name" value="ClpB_D2-small"/>
    <property type="match status" value="1"/>
</dbReference>
<dbReference type="SUPFAM" id="SSF52540">
    <property type="entry name" value="P-loop containing nucleoside triphosphate hydrolases"/>
    <property type="match status" value="2"/>
</dbReference>
<protein>
    <recommendedName>
        <fullName>ATP-dependent Clp protease ATP-binding subunit ClpL</fullName>
    </recommendedName>
</protein>
<comment type="function">
    <text evidence="1">Required for the development of induced thermotolerance.</text>
</comment>
<comment type="similarity">
    <text evidence="4">Belongs to the ClpA/ClpB family. ClpL subfamily.</text>
</comment>
<evidence type="ECO:0000250" key="1"/>
<evidence type="ECO:0000255" key="2"/>
<evidence type="ECO:0000256" key="3">
    <source>
        <dbReference type="SAM" id="MobiDB-lite"/>
    </source>
</evidence>
<evidence type="ECO:0000305" key="4"/>
<gene>
    <name type="primary">clpL</name>
    <name type="ordered locus">SA2336</name>
</gene>
<proteinExistence type="evidence at protein level"/>
<feature type="chain" id="PRO_0000269499" description="ATP-dependent Clp protease ATP-binding subunit ClpL">
    <location>
        <begin position="1"/>
        <end position="701"/>
    </location>
</feature>
<feature type="domain" description="UVR">
    <location>
        <begin position="336"/>
        <end position="371"/>
    </location>
</feature>
<feature type="region of interest" description="Disordered" evidence="3">
    <location>
        <begin position="45"/>
        <end position="81"/>
    </location>
</feature>
<feature type="region of interest" description="I">
    <location>
        <begin position="81"/>
        <end position="332"/>
    </location>
</feature>
<feature type="region of interest" description="II">
    <location>
        <begin position="383"/>
        <end position="575"/>
    </location>
</feature>
<feature type="compositionally biased region" description="Low complexity" evidence="3">
    <location>
        <begin position="49"/>
        <end position="72"/>
    </location>
</feature>
<feature type="binding site" evidence="2">
    <location>
        <begin position="126"/>
        <end position="133"/>
    </location>
    <ligand>
        <name>ATP</name>
        <dbReference type="ChEBI" id="CHEBI:30616"/>
    </ligand>
</feature>
<feature type="binding site" evidence="2">
    <location>
        <begin position="457"/>
        <end position="464"/>
    </location>
    <ligand>
        <name>ATP</name>
        <dbReference type="ChEBI" id="CHEBI:30616"/>
    </ligand>
</feature>
<sequence length="701" mass="77857">MNNGFFNSDFDSIFRRMMQDMQGSNQVGNKKYYINGKEVSPEELAQLTQQGSNQSAEQSAQAFQQAAQRQQGQQGGNGNYLEQIGRNLTQEARDGLLDPVIGRDKEIQETAEVLSRRTKNNPILVGEAGVGKTAIVEGLAQAIVEGNVPAAIKDKEIISVDISSLEAGTQYRGAFEENIQKLIEGVKSSQNAVLFFDEIHQIIGSGATGSDSGSKGLSDILKPALSRGEISIIGATTQDEYRNNILKDAALTRRFNEVLVNEPSAKDTVEILKGIREKFEEHHQVKLPDDVLKACVDLSIQYIPQRLLPDKAIDVLDITAAHLSAQSPAVDKVETEKRISELENDKRKAVSAEEYKKADDIQNEIKSLQDKLENSNGEHTAVATVHDISDTIQRLTGIPVSQMDDNDIERLKNISNRLRSKIIGQDQAVEMVSRAIRRNRAGFDDGNRPIGSFLFVGPTGVGKTELAKQLAIDLFGNKDALIRLDMSEYSDTTAVSKMIGTTAGYVGYDDNSNTLTEKVRRNPYSVILFDEIEKANPQILTLLLQVMDDGNLTDGQGNVINFKNTIIICTSNAGFGNGNDAEEKDIMHEMKKFFRPEFLNRFNGIVEFLHLDKDALQDIVNLLLDDVQVTLDKKGITMDVSQDAKDWLIEEGYDEELGARPLRRIVEQQVRDKITDYYLDHTDVKHVDIDVEDNELVVKGK</sequence>
<accession>Q7A3F4</accession>
<name>CLPL_STAAN</name>
<reference key="1">
    <citation type="journal article" date="2001" name="Lancet">
        <title>Whole genome sequencing of meticillin-resistant Staphylococcus aureus.</title>
        <authorList>
            <person name="Kuroda M."/>
            <person name="Ohta T."/>
            <person name="Uchiyama I."/>
            <person name="Baba T."/>
            <person name="Yuzawa H."/>
            <person name="Kobayashi I."/>
            <person name="Cui L."/>
            <person name="Oguchi A."/>
            <person name="Aoki K."/>
            <person name="Nagai Y."/>
            <person name="Lian J.-Q."/>
            <person name="Ito T."/>
            <person name="Kanamori M."/>
            <person name="Matsumaru H."/>
            <person name="Maruyama A."/>
            <person name="Murakami H."/>
            <person name="Hosoyama A."/>
            <person name="Mizutani-Ui Y."/>
            <person name="Takahashi N.K."/>
            <person name="Sawano T."/>
            <person name="Inoue R."/>
            <person name="Kaito C."/>
            <person name="Sekimizu K."/>
            <person name="Hirakawa H."/>
            <person name="Kuhara S."/>
            <person name="Goto S."/>
            <person name="Yabuzaki J."/>
            <person name="Kanehisa M."/>
            <person name="Yamashita A."/>
            <person name="Oshima K."/>
            <person name="Furuya K."/>
            <person name="Yoshino C."/>
            <person name="Shiba T."/>
            <person name="Hattori M."/>
            <person name="Ogasawara N."/>
            <person name="Hayashi H."/>
            <person name="Hiramatsu K."/>
        </authorList>
    </citation>
    <scope>NUCLEOTIDE SEQUENCE [LARGE SCALE GENOMIC DNA]</scope>
    <source>
        <strain>N315</strain>
    </source>
</reference>
<reference key="2">
    <citation type="journal article" date="2005" name="J. Microbiol. Methods">
        <title>Correlation of proteomic and transcriptomic profiles of Staphylococcus aureus during the post-exponential phase of growth.</title>
        <authorList>
            <person name="Scherl A."/>
            <person name="Francois P."/>
            <person name="Bento M."/>
            <person name="Deshusses J.M."/>
            <person name="Charbonnier Y."/>
            <person name="Converset V."/>
            <person name="Huyghe A."/>
            <person name="Walter N."/>
            <person name="Hoogland C."/>
            <person name="Appel R.D."/>
            <person name="Sanchez J.-C."/>
            <person name="Zimmermann-Ivol C.G."/>
            <person name="Corthals G.L."/>
            <person name="Hochstrasser D.F."/>
            <person name="Schrenzel J."/>
        </authorList>
    </citation>
    <scope>IDENTIFICATION BY MASS SPECTROMETRY</scope>
    <source>
        <strain>N315</strain>
    </source>
</reference>
<reference key="3">
    <citation type="submission" date="2007-10" db="UniProtKB">
        <title>Shotgun proteomic analysis of total and membrane protein extracts of S. aureus strain N315.</title>
        <authorList>
            <person name="Vaezzadeh A.R."/>
            <person name="Deshusses J."/>
            <person name="Lescuyer P."/>
            <person name="Hochstrasser D.F."/>
        </authorList>
    </citation>
    <scope>IDENTIFICATION BY MASS SPECTROMETRY [LARGE SCALE ANALYSIS]</scope>
    <source>
        <strain>N315</strain>
    </source>
</reference>